<protein>
    <recommendedName>
        <fullName>Peptide YY-like</fullName>
        <shortName>PYY</shortName>
    </recommendedName>
</protein>
<reference key="1">
    <citation type="journal article" date="1992" name="Eur. J. Biochem.">
        <title>Characterization of peptides related to neuropeptide tyrosine and peptide tyrosine-tyrosine from the brain and gastrointestinal tract of teleost fish.</title>
        <authorList>
            <person name="Jensen J."/>
            <person name="Conlon J.M."/>
        </authorList>
    </citation>
    <scope>PROTEIN SEQUENCE</scope>
    <scope>AMIDATION AT TYR-36</scope>
    <source>
        <tissue>Brain</tissue>
        <tissue>Stomach</tissue>
    </source>
</reference>
<reference key="2">
    <citation type="journal article" date="1992" name="Peptides">
        <title>Rainbow trout (Oncorhynchus mykiss) neuropeptide Y.</title>
        <authorList>
            <person name="Barton C.L."/>
            <person name="Shaw C."/>
            <person name="Halton D.W."/>
            <person name="Thim L."/>
        </authorList>
    </citation>
    <scope>PROTEIN SEQUENCE</scope>
    <source>
        <tissue>Brain</tissue>
    </source>
</reference>
<accession>P69093</accession>
<accession>P09474</accession>
<organism>
    <name type="scientific">Oncorhynchus mykiss</name>
    <name type="common">Rainbow trout</name>
    <name type="synonym">Salmo gairdneri</name>
    <dbReference type="NCBI Taxonomy" id="8022"/>
    <lineage>
        <taxon>Eukaryota</taxon>
        <taxon>Metazoa</taxon>
        <taxon>Chordata</taxon>
        <taxon>Craniata</taxon>
        <taxon>Vertebrata</taxon>
        <taxon>Euteleostomi</taxon>
        <taxon>Actinopterygii</taxon>
        <taxon>Neopterygii</taxon>
        <taxon>Teleostei</taxon>
        <taxon>Protacanthopterygii</taxon>
        <taxon>Salmoniformes</taxon>
        <taxon>Salmonidae</taxon>
        <taxon>Salmoninae</taxon>
        <taxon>Oncorhynchus</taxon>
    </lineage>
</organism>
<dbReference type="SMR" id="P69093"/>
<dbReference type="Proteomes" id="UP000694395">
    <property type="component" value="Unplaced"/>
</dbReference>
<dbReference type="GO" id="GO:0005615">
    <property type="term" value="C:extracellular space"/>
    <property type="evidence" value="ECO:0007669"/>
    <property type="project" value="TreeGrafter"/>
</dbReference>
<dbReference type="GO" id="GO:0005184">
    <property type="term" value="F:neuropeptide hormone activity"/>
    <property type="evidence" value="ECO:0007669"/>
    <property type="project" value="TreeGrafter"/>
</dbReference>
<dbReference type="GO" id="GO:0031841">
    <property type="term" value="F:neuropeptide Y receptor binding"/>
    <property type="evidence" value="ECO:0007669"/>
    <property type="project" value="TreeGrafter"/>
</dbReference>
<dbReference type="GO" id="GO:0007631">
    <property type="term" value="P:feeding behavior"/>
    <property type="evidence" value="ECO:0007669"/>
    <property type="project" value="TreeGrafter"/>
</dbReference>
<dbReference type="GO" id="GO:0007218">
    <property type="term" value="P:neuropeptide signaling pathway"/>
    <property type="evidence" value="ECO:0007669"/>
    <property type="project" value="TreeGrafter"/>
</dbReference>
<dbReference type="CDD" id="cd00126">
    <property type="entry name" value="PAH"/>
    <property type="match status" value="1"/>
</dbReference>
<dbReference type="Gene3D" id="6.10.250.900">
    <property type="match status" value="1"/>
</dbReference>
<dbReference type="InterPro" id="IPR001955">
    <property type="entry name" value="Pancreatic_hormone-like"/>
</dbReference>
<dbReference type="InterPro" id="IPR020392">
    <property type="entry name" value="Pancreatic_hormone-like_CS"/>
</dbReference>
<dbReference type="PANTHER" id="PTHR10533">
    <property type="entry name" value="NEUROPEPTIDE Y/PANCREATIC HORMONE/PEPTIDE YY"/>
    <property type="match status" value="1"/>
</dbReference>
<dbReference type="PANTHER" id="PTHR10533:SF14">
    <property type="entry name" value="PEPTIDE YY-RELATED"/>
    <property type="match status" value="1"/>
</dbReference>
<dbReference type="Pfam" id="PF00159">
    <property type="entry name" value="Hormone_3"/>
    <property type="match status" value="1"/>
</dbReference>
<dbReference type="PRINTS" id="PR00278">
    <property type="entry name" value="PANCHORMONE"/>
</dbReference>
<dbReference type="SMART" id="SM00309">
    <property type="entry name" value="PAH"/>
    <property type="match status" value="1"/>
</dbReference>
<dbReference type="PROSITE" id="PS00265">
    <property type="entry name" value="PANCREATIC_HORMONE_1"/>
    <property type="match status" value="1"/>
</dbReference>
<dbReference type="PROSITE" id="PS50276">
    <property type="entry name" value="PANCREATIC_HORMONE_2"/>
    <property type="match status" value="1"/>
</dbReference>
<proteinExistence type="evidence at protein level"/>
<name>PYY_ONCMY</name>
<feature type="peptide" id="PRO_0000044816" description="Peptide YY-like">
    <location>
        <begin position="1"/>
        <end position="36"/>
    </location>
</feature>
<feature type="modified residue" description="Tyrosine amide" evidence="1">
    <location>
        <position position="36"/>
    </location>
</feature>
<evidence type="ECO:0000269" key="1">
    <source>
    </source>
</evidence>
<evidence type="ECO:0000305" key="2"/>
<keyword id="KW-0027">Amidation</keyword>
<keyword id="KW-0903">Direct protein sequencing</keyword>
<keyword id="KW-0372">Hormone</keyword>
<keyword id="KW-0964">Secreted</keyword>
<sequence length="36" mass="4305">YPPKPENPGEDAPPEELAKYYTALRHYINLITRQRY</sequence>
<comment type="subcellular location">
    <subcellularLocation>
        <location>Secreted</location>
    </subcellularLocation>
</comment>
<comment type="similarity">
    <text evidence="2">Belongs to the NPY family.</text>
</comment>